<name>TAL_NOVAD</name>
<keyword id="KW-0963">Cytoplasm</keyword>
<keyword id="KW-0570">Pentose shunt</keyword>
<keyword id="KW-1185">Reference proteome</keyword>
<keyword id="KW-0704">Schiff base</keyword>
<keyword id="KW-0808">Transferase</keyword>
<protein>
    <recommendedName>
        <fullName evidence="1">Probable transaldolase</fullName>
        <ecNumber evidence="1">2.2.1.2</ecNumber>
    </recommendedName>
</protein>
<feature type="chain" id="PRO_1000126334" description="Probable transaldolase">
    <location>
        <begin position="1"/>
        <end position="217"/>
    </location>
</feature>
<feature type="active site" description="Schiff-base intermediate with substrate" evidence="1">
    <location>
        <position position="83"/>
    </location>
</feature>
<comment type="function">
    <text evidence="1">Transaldolase is important for the balance of metabolites in the pentose-phosphate pathway.</text>
</comment>
<comment type="catalytic activity">
    <reaction evidence="1">
        <text>D-sedoheptulose 7-phosphate + D-glyceraldehyde 3-phosphate = D-erythrose 4-phosphate + beta-D-fructose 6-phosphate</text>
        <dbReference type="Rhea" id="RHEA:17053"/>
        <dbReference type="ChEBI" id="CHEBI:16897"/>
        <dbReference type="ChEBI" id="CHEBI:57483"/>
        <dbReference type="ChEBI" id="CHEBI:57634"/>
        <dbReference type="ChEBI" id="CHEBI:59776"/>
        <dbReference type="EC" id="2.2.1.2"/>
    </reaction>
</comment>
<comment type="pathway">
    <text evidence="1">Carbohydrate degradation; pentose phosphate pathway; D-glyceraldehyde 3-phosphate and beta-D-fructose 6-phosphate from D-ribose 5-phosphate and D-xylulose 5-phosphate (non-oxidative stage): step 2/3.</text>
</comment>
<comment type="subcellular location">
    <subcellularLocation>
        <location evidence="1">Cytoplasm</location>
    </subcellularLocation>
</comment>
<comment type="similarity">
    <text evidence="1">Belongs to the transaldolase family. Type 3B subfamily.</text>
</comment>
<sequence>MKFFVDTADTAEIADLAATGLLDGVTTNPTLIAKAGKDFIEVTKEICGLVDGPVSAEVVALDHEGMMREAEVLRKIADNVCIKVPLTVDGLKTCKALTGEGTMVNVTLCFSANQALLAAKAGATFISPFVGRHDDNGFDGMDLIRDIRLIYDNYAFETQILVASIRHGVHVLESARIGADVITAPPAVIKGLFKHVLTDKGIEGFLADWAKTGQKIV</sequence>
<reference key="1">
    <citation type="submission" date="2006-01" db="EMBL/GenBank/DDBJ databases">
        <title>Complete sequence of Novosphingobium aromaticivorans DSM 12444.</title>
        <authorList>
            <consortium name="US DOE Joint Genome Institute"/>
            <person name="Copeland A."/>
            <person name="Lucas S."/>
            <person name="Lapidus A."/>
            <person name="Barry K."/>
            <person name="Detter J.C."/>
            <person name="Glavina T."/>
            <person name="Hammon N."/>
            <person name="Israni S."/>
            <person name="Pitluck S."/>
            <person name="Chain P."/>
            <person name="Malfatti S."/>
            <person name="Shin M."/>
            <person name="Vergez L."/>
            <person name="Schmutz J."/>
            <person name="Larimer F."/>
            <person name="Land M."/>
            <person name="Kyrpides N."/>
            <person name="Ivanova N."/>
            <person name="Fredrickson J."/>
            <person name="Balkwill D."/>
            <person name="Romine M.F."/>
            <person name="Richardson P."/>
        </authorList>
    </citation>
    <scope>NUCLEOTIDE SEQUENCE [LARGE SCALE GENOMIC DNA]</scope>
    <source>
        <strain>ATCC 700278 / DSM 12444 / CCUG 56034 / CIP 105152 / NBRC 16084 / F199</strain>
    </source>
</reference>
<accession>Q2G5P7</accession>
<evidence type="ECO:0000255" key="1">
    <source>
        <dbReference type="HAMAP-Rule" id="MF_00494"/>
    </source>
</evidence>
<proteinExistence type="inferred from homology"/>
<organism>
    <name type="scientific">Novosphingobium aromaticivorans (strain ATCC 700278 / DSM 12444 / CCUG 56034 / CIP 105152 / NBRC 16084 / F199)</name>
    <dbReference type="NCBI Taxonomy" id="279238"/>
    <lineage>
        <taxon>Bacteria</taxon>
        <taxon>Pseudomonadati</taxon>
        <taxon>Pseudomonadota</taxon>
        <taxon>Alphaproteobacteria</taxon>
        <taxon>Sphingomonadales</taxon>
        <taxon>Sphingomonadaceae</taxon>
        <taxon>Novosphingobium</taxon>
    </lineage>
</organism>
<dbReference type="EC" id="2.2.1.2" evidence="1"/>
<dbReference type="EMBL" id="CP000248">
    <property type="protein sequence ID" value="ABD26826.1"/>
    <property type="molecule type" value="Genomic_DNA"/>
</dbReference>
<dbReference type="RefSeq" id="WP_011446032.1">
    <property type="nucleotide sequence ID" value="NC_007794.1"/>
</dbReference>
<dbReference type="SMR" id="Q2G5P7"/>
<dbReference type="STRING" id="279238.Saro_2390"/>
<dbReference type="KEGG" id="nar:Saro_2390"/>
<dbReference type="eggNOG" id="COG0176">
    <property type="taxonomic scope" value="Bacteria"/>
</dbReference>
<dbReference type="HOGENOM" id="CLU_079764_0_0_5"/>
<dbReference type="UniPathway" id="UPA00115">
    <property type="reaction ID" value="UER00414"/>
</dbReference>
<dbReference type="Proteomes" id="UP000009134">
    <property type="component" value="Chromosome"/>
</dbReference>
<dbReference type="GO" id="GO:0005737">
    <property type="term" value="C:cytoplasm"/>
    <property type="evidence" value="ECO:0007669"/>
    <property type="project" value="UniProtKB-SubCell"/>
</dbReference>
<dbReference type="GO" id="GO:0016832">
    <property type="term" value="F:aldehyde-lyase activity"/>
    <property type="evidence" value="ECO:0007669"/>
    <property type="project" value="InterPro"/>
</dbReference>
<dbReference type="GO" id="GO:0004801">
    <property type="term" value="F:transaldolase activity"/>
    <property type="evidence" value="ECO:0007669"/>
    <property type="project" value="UniProtKB-UniRule"/>
</dbReference>
<dbReference type="GO" id="GO:0005975">
    <property type="term" value="P:carbohydrate metabolic process"/>
    <property type="evidence" value="ECO:0007669"/>
    <property type="project" value="InterPro"/>
</dbReference>
<dbReference type="GO" id="GO:0006098">
    <property type="term" value="P:pentose-phosphate shunt"/>
    <property type="evidence" value="ECO:0007669"/>
    <property type="project" value="UniProtKB-UniRule"/>
</dbReference>
<dbReference type="CDD" id="cd00956">
    <property type="entry name" value="Transaldolase_FSA"/>
    <property type="match status" value="1"/>
</dbReference>
<dbReference type="FunFam" id="3.20.20.70:FF:000018">
    <property type="entry name" value="Probable transaldolase"/>
    <property type="match status" value="1"/>
</dbReference>
<dbReference type="Gene3D" id="3.20.20.70">
    <property type="entry name" value="Aldolase class I"/>
    <property type="match status" value="1"/>
</dbReference>
<dbReference type="HAMAP" id="MF_00494">
    <property type="entry name" value="Transaldolase_3b"/>
    <property type="match status" value="1"/>
</dbReference>
<dbReference type="InterPro" id="IPR013785">
    <property type="entry name" value="Aldolase_TIM"/>
</dbReference>
<dbReference type="InterPro" id="IPR001585">
    <property type="entry name" value="TAL/FSA"/>
</dbReference>
<dbReference type="InterPro" id="IPR022999">
    <property type="entry name" value="Transaldolase_3B"/>
</dbReference>
<dbReference type="InterPro" id="IPR004731">
    <property type="entry name" value="Transaldolase_3B/F6P_aldolase"/>
</dbReference>
<dbReference type="InterPro" id="IPR018225">
    <property type="entry name" value="Transaldolase_AS"/>
</dbReference>
<dbReference type="InterPro" id="IPR033919">
    <property type="entry name" value="TSA/FSA_arc/bac"/>
</dbReference>
<dbReference type="NCBIfam" id="TIGR00875">
    <property type="entry name" value="fsa_talC_mipB"/>
    <property type="match status" value="1"/>
</dbReference>
<dbReference type="PANTHER" id="PTHR10683:SF40">
    <property type="entry name" value="FRUCTOSE-6-PHOSPHATE ALDOLASE 1-RELATED"/>
    <property type="match status" value="1"/>
</dbReference>
<dbReference type="PANTHER" id="PTHR10683">
    <property type="entry name" value="TRANSALDOLASE"/>
    <property type="match status" value="1"/>
</dbReference>
<dbReference type="Pfam" id="PF00923">
    <property type="entry name" value="TAL_FSA"/>
    <property type="match status" value="1"/>
</dbReference>
<dbReference type="SUPFAM" id="SSF51569">
    <property type="entry name" value="Aldolase"/>
    <property type="match status" value="1"/>
</dbReference>
<dbReference type="PROSITE" id="PS01054">
    <property type="entry name" value="TRANSALDOLASE_1"/>
    <property type="match status" value="1"/>
</dbReference>
<gene>
    <name evidence="1" type="primary">tal</name>
    <name type="ordered locus">Saro_2390</name>
</gene>